<name>METRL_XENLA</name>
<accession>A1L2K1</accession>
<proteinExistence type="evidence at transcript level"/>
<gene>
    <name type="primary">metrnl</name>
</gene>
<protein>
    <recommendedName>
        <fullName>Meteorin-like protein</fullName>
    </recommendedName>
</protein>
<keyword id="KW-1015">Disulfide bond</keyword>
<keyword id="KW-0325">Glycoprotein</keyword>
<keyword id="KW-0372">Hormone</keyword>
<keyword id="KW-1185">Reference proteome</keyword>
<keyword id="KW-0964">Secreted</keyword>
<keyword id="KW-0732">Signal</keyword>
<evidence type="ECO:0000250" key="1"/>
<evidence type="ECO:0000255" key="2"/>
<evidence type="ECO:0000255" key="3">
    <source>
        <dbReference type="PROSITE-ProRule" id="PRU00114"/>
    </source>
</evidence>
<evidence type="ECO:0000305" key="4"/>
<organism>
    <name type="scientific">Xenopus laevis</name>
    <name type="common">African clawed frog</name>
    <dbReference type="NCBI Taxonomy" id="8355"/>
    <lineage>
        <taxon>Eukaryota</taxon>
        <taxon>Metazoa</taxon>
        <taxon>Chordata</taxon>
        <taxon>Craniata</taxon>
        <taxon>Vertebrata</taxon>
        <taxon>Euteleostomi</taxon>
        <taxon>Amphibia</taxon>
        <taxon>Batrachia</taxon>
        <taxon>Anura</taxon>
        <taxon>Pipoidea</taxon>
        <taxon>Pipidae</taxon>
        <taxon>Xenopodinae</taxon>
        <taxon>Xenopus</taxon>
        <taxon>Xenopus</taxon>
    </lineage>
</organism>
<reference key="1">
    <citation type="submission" date="2006-12" db="EMBL/GenBank/DDBJ databases">
        <authorList>
            <consortium name="NIH - Xenopus Gene Collection (XGC) project"/>
        </authorList>
    </citation>
    <scope>NUCLEOTIDE SEQUENCE [LARGE SCALE MRNA]</scope>
    <source>
        <tissue>Spleen</tissue>
    </source>
</reference>
<feature type="signal peptide" evidence="2">
    <location>
        <begin position="1"/>
        <end position="20"/>
    </location>
</feature>
<feature type="chain" id="PRO_0000289108" description="Meteorin-like protein">
    <location>
        <begin position="21"/>
        <end position="286"/>
    </location>
</feature>
<feature type="glycosylation site" description="N-linked (GlcNAc...) asparagine" evidence="2">
    <location>
        <position position="203"/>
    </location>
</feature>
<feature type="disulfide bond" evidence="3">
    <location>
        <begin position="28"/>
        <end position="51"/>
    </location>
</feature>
<feature type="disulfide bond" evidence="3">
    <location>
        <begin position="84"/>
        <end position="120"/>
    </location>
</feature>
<feature type="disulfide bond" evidence="3">
    <location>
        <begin position="165"/>
        <end position="235"/>
    </location>
</feature>
<feature type="disulfide bond" evidence="3">
    <location>
        <begin position="168"/>
        <end position="259"/>
    </location>
</feature>
<feature type="disulfide bond" evidence="3">
    <location>
        <begin position="178"/>
        <end position="281"/>
    </location>
</feature>
<sequence>MLRRGLLSFFMVILIDRGTSQLYSSDMCNWKGSGLTHEGHTKDVEQVYLRCSEGSVEWLYPTGAMVINLRPNTLTSAYKHLTVCIKPFKDSKGANIYSEKTGELKLVVPDGENNPHKVYCFGLDRGGLYIEATPQQDISRKITGFQYELISQRTLSDLHTVSDPCRPCSDTEVLLAVCISDFVVKGTISAVTNDEELQESLINVTVDKLYRQKSKIFLPKDNGGWEGMIRTPLECGVKTGMGSFLFTGRMHFGEPRLGCTPRYKDFKRIYLEAKKQGLNPCEISTD</sequence>
<dbReference type="EMBL" id="BC129567">
    <property type="protein sequence ID" value="AAI29568.1"/>
    <property type="molecule type" value="mRNA"/>
</dbReference>
<dbReference type="RefSeq" id="NP_001091122.1">
    <property type="nucleotide sequence ID" value="NM_001097653.1"/>
</dbReference>
<dbReference type="SMR" id="A1L2K1"/>
<dbReference type="GlyCosmos" id="A1L2K1">
    <property type="glycosylation" value="1 site, No reported glycans"/>
</dbReference>
<dbReference type="GeneID" id="100036871"/>
<dbReference type="KEGG" id="xla:100036871"/>
<dbReference type="AGR" id="Xenbase:XB-GENE-6078852"/>
<dbReference type="CTD" id="100036871"/>
<dbReference type="Xenbase" id="XB-GENE-6078852">
    <property type="gene designation" value="metrnl.L"/>
</dbReference>
<dbReference type="OrthoDB" id="6092325at2759"/>
<dbReference type="Proteomes" id="UP000186698">
    <property type="component" value="Chromosome 9_10L"/>
</dbReference>
<dbReference type="Bgee" id="100036871">
    <property type="expression patterns" value="Expressed in heart and 19 other cell types or tissues"/>
</dbReference>
<dbReference type="GO" id="GO:0005615">
    <property type="term" value="C:extracellular space"/>
    <property type="evidence" value="ECO:0000250"/>
    <property type="project" value="UniProtKB"/>
</dbReference>
<dbReference type="GO" id="GO:0005179">
    <property type="term" value="F:hormone activity"/>
    <property type="evidence" value="ECO:0000250"/>
    <property type="project" value="UniProtKB"/>
</dbReference>
<dbReference type="GO" id="GO:0050873">
    <property type="term" value="P:brown fat cell differentiation"/>
    <property type="evidence" value="ECO:0000250"/>
    <property type="project" value="UniProtKB"/>
</dbReference>
<dbReference type="GO" id="GO:0097009">
    <property type="term" value="P:energy homeostasis"/>
    <property type="evidence" value="ECO:0000250"/>
    <property type="project" value="UniProtKB"/>
</dbReference>
<dbReference type="GO" id="GO:0050728">
    <property type="term" value="P:negative regulation of inflammatory response"/>
    <property type="evidence" value="ECO:0000250"/>
    <property type="project" value="UniProtKB"/>
</dbReference>
<dbReference type="GO" id="GO:0090336">
    <property type="term" value="P:positive regulation of brown fat cell differentiation"/>
    <property type="evidence" value="ECO:0000250"/>
    <property type="project" value="UniProtKB"/>
</dbReference>
<dbReference type="GO" id="GO:0009409">
    <property type="term" value="P:response to cold"/>
    <property type="evidence" value="ECO:0000250"/>
    <property type="project" value="UniProtKB"/>
</dbReference>
<dbReference type="GO" id="GO:0014850">
    <property type="term" value="P:response to muscle activity"/>
    <property type="evidence" value="ECO:0000250"/>
    <property type="project" value="UniProtKB"/>
</dbReference>
<dbReference type="InterPro" id="IPR051998">
    <property type="entry name" value="Meteorin-like"/>
</dbReference>
<dbReference type="PANTHER" id="PTHR28593">
    <property type="entry name" value="METEORIN-LIKE PROTEIN"/>
    <property type="match status" value="1"/>
</dbReference>
<dbReference type="PANTHER" id="PTHR28593:SF1">
    <property type="entry name" value="METEORIN-LIKE PROTEIN"/>
    <property type="match status" value="1"/>
</dbReference>
<comment type="function">
    <text evidence="1">Hormone induced following exercise or cold exposure that promotes energy expenditure. Induced either in the skeletal muscle after exercise or in adipose tissue following cold exposure and is present in the circulation. Able to stimulate energy expenditure associated with the browning of the white fat depots and improves glucose tolerance (By similarity).</text>
</comment>
<comment type="subcellular location">
    <subcellularLocation>
        <location evidence="1">Secreted</location>
    </subcellularLocation>
</comment>
<comment type="similarity">
    <text evidence="4">Belongs to the meteorin family.</text>
</comment>